<dbReference type="EC" id="2.8.1.13" evidence="1"/>
<dbReference type="EMBL" id="CP000438">
    <property type="protein sequence ID" value="ABJ11849.1"/>
    <property type="molecule type" value="Genomic_DNA"/>
</dbReference>
<dbReference type="RefSeq" id="WP_003131114.1">
    <property type="nucleotide sequence ID" value="NZ_CP034244.1"/>
</dbReference>
<dbReference type="SMR" id="Q02NB8"/>
<dbReference type="KEGG" id="pau:PA14_30150"/>
<dbReference type="PseudoCAP" id="PA14_30150"/>
<dbReference type="HOGENOM" id="CLU_035188_1_0_6"/>
<dbReference type="BioCyc" id="PAER208963:G1G74-2525-MONOMER"/>
<dbReference type="Proteomes" id="UP000000653">
    <property type="component" value="Chromosome"/>
</dbReference>
<dbReference type="GO" id="GO:0005737">
    <property type="term" value="C:cytoplasm"/>
    <property type="evidence" value="ECO:0007669"/>
    <property type="project" value="UniProtKB-SubCell"/>
</dbReference>
<dbReference type="GO" id="GO:0005524">
    <property type="term" value="F:ATP binding"/>
    <property type="evidence" value="ECO:0007669"/>
    <property type="project" value="UniProtKB-KW"/>
</dbReference>
<dbReference type="GO" id="GO:0000049">
    <property type="term" value="F:tRNA binding"/>
    <property type="evidence" value="ECO:0007669"/>
    <property type="project" value="UniProtKB-KW"/>
</dbReference>
<dbReference type="GO" id="GO:0103016">
    <property type="term" value="F:tRNA-uridine 2-sulfurtransferase activity"/>
    <property type="evidence" value="ECO:0007669"/>
    <property type="project" value="UniProtKB-EC"/>
</dbReference>
<dbReference type="GO" id="GO:0002143">
    <property type="term" value="P:tRNA wobble position uridine thiolation"/>
    <property type="evidence" value="ECO:0007669"/>
    <property type="project" value="TreeGrafter"/>
</dbReference>
<dbReference type="CDD" id="cd01998">
    <property type="entry name" value="MnmA_TRMU-like"/>
    <property type="match status" value="1"/>
</dbReference>
<dbReference type="FunFam" id="2.30.30.280:FF:000001">
    <property type="entry name" value="tRNA-specific 2-thiouridylase MnmA"/>
    <property type="match status" value="1"/>
</dbReference>
<dbReference type="FunFam" id="2.40.30.10:FF:000023">
    <property type="entry name" value="tRNA-specific 2-thiouridylase MnmA"/>
    <property type="match status" value="1"/>
</dbReference>
<dbReference type="FunFam" id="3.40.50.620:FF:000004">
    <property type="entry name" value="tRNA-specific 2-thiouridylase MnmA"/>
    <property type="match status" value="1"/>
</dbReference>
<dbReference type="Gene3D" id="2.30.30.280">
    <property type="entry name" value="Adenine nucleotide alpha hydrolases-like domains"/>
    <property type="match status" value="1"/>
</dbReference>
<dbReference type="Gene3D" id="3.40.50.620">
    <property type="entry name" value="HUPs"/>
    <property type="match status" value="1"/>
</dbReference>
<dbReference type="Gene3D" id="2.40.30.10">
    <property type="entry name" value="Translation factors"/>
    <property type="match status" value="1"/>
</dbReference>
<dbReference type="HAMAP" id="MF_00144">
    <property type="entry name" value="tRNA_thiouridyl_MnmA"/>
    <property type="match status" value="1"/>
</dbReference>
<dbReference type="InterPro" id="IPR004506">
    <property type="entry name" value="MnmA-like"/>
</dbReference>
<dbReference type="InterPro" id="IPR046885">
    <property type="entry name" value="MnmA-like_C"/>
</dbReference>
<dbReference type="InterPro" id="IPR046884">
    <property type="entry name" value="MnmA-like_central"/>
</dbReference>
<dbReference type="InterPro" id="IPR023382">
    <property type="entry name" value="MnmA-like_central_sf"/>
</dbReference>
<dbReference type="InterPro" id="IPR014729">
    <property type="entry name" value="Rossmann-like_a/b/a_fold"/>
</dbReference>
<dbReference type="NCBIfam" id="NF001138">
    <property type="entry name" value="PRK00143.1"/>
    <property type="match status" value="1"/>
</dbReference>
<dbReference type="NCBIfam" id="TIGR00420">
    <property type="entry name" value="trmU"/>
    <property type="match status" value="1"/>
</dbReference>
<dbReference type="PANTHER" id="PTHR11933:SF5">
    <property type="entry name" value="MITOCHONDRIAL TRNA-SPECIFIC 2-THIOURIDYLASE 1"/>
    <property type="match status" value="1"/>
</dbReference>
<dbReference type="PANTHER" id="PTHR11933">
    <property type="entry name" value="TRNA 5-METHYLAMINOMETHYL-2-THIOURIDYLATE -METHYLTRANSFERASE"/>
    <property type="match status" value="1"/>
</dbReference>
<dbReference type="Pfam" id="PF03054">
    <property type="entry name" value="tRNA_Me_trans"/>
    <property type="match status" value="1"/>
</dbReference>
<dbReference type="Pfam" id="PF20258">
    <property type="entry name" value="tRNA_Me_trans_C"/>
    <property type="match status" value="1"/>
</dbReference>
<dbReference type="Pfam" id="PF20259">
    <property type="entry name" value="tRNA_Me_trans_M"/>
    <property type="match status" value="1"/>
</dbReference>
<dbReference type="SUPFAM" id="SSF52402">
    <property type="entry name" value="Adenine nucleotide alpha hydrolases-like"/>
    <property type="match status" value="1"/>
</dbReference>
<keyword id="KW-0067">ATP-binding</keyword>
<keyword id="KW-0963">Cytoplasm</keyword>
<keyword id="KW-1015">Disulfide bond</keyword>
<keyword id="KW-0547">Nucleotide-binding</keyword>
<keyword id="KW-0694">RNA-binding</keyword>
<keyword id="KW-0808">Transferase</keyword>
<keyword id="KW-0819">tRNA processing</keyword>
<keyword id="KW-0820">tRNA-binding</keyword>
<organism>
    <name type="scientific">Pseudomonas aeruginosa (strain UCBPP-PA14)</name>
    <dbReference type="NCBI Taxonomy" id="208963"/>
    <lineage>
        <taxon>Bacteria</taxon>
        <taxon>Pseudomonadati</taxon>
        <taxon>Pseudomonadota</taxon>
        <taxon>Gammaproteobacteria</taxon>
        <taxon>Pseudomonadales</taxon>
        <taxon>Pseudomonadaceae</taxon>
        <taxon>Pseudomonas</taxon>
    </lineage>
</organism>
<name>MNMA_PSEAB</name>
<accession>Q02NB8</accession>
<evidence type="ECO:0000255" key="1">
    <source>
        <dbReference type="HAMAP-Rule" id="MF_00144"/>
    </source>
</evidence>
<gene>
    <name evidence="1" type="primary">mnmA</name>
    <name type="ordered locus">PA14_30150</name>
</gene>
<comment type="function">
    <text evidence="1">Catalyzes the 2-thiolation of uridine at the wobble position (U34) of tRNA, leading to the formation of s(2)U34.</text>
</comment>
<comment type="catalytic activity">
    <reaction evidence="1">
        <text>S-sulfanyl-L-cysteinyl-[protein] + uridine(34) in tRNA + AH2 + ATP = 2-thiouridine(34) in tRNA + L-cysteinyl-[protein] + A + AMP + diphosphate + H(+)</text>
        <dbReference type="Rhea" id="RHEA:47032"/>
        <dbReference type="Rhea" id="RHEA-COMP:10131"/>
        <dbReference type="Rhea" id="RHEA-COMP:11726"/>
        <dbReference type="Rhea" id="RHEA-COMP:11727"/>
        <dbReference type="Rhea" id="RHEA-COMP:11728"/>
        <dbReference type="ChEBI" id="CHEBI:13193"/>
        <dbReference type="ChEBI" id="CHEBI:15378"/>
        <dbReference type="ChEBI" id="CHEBI:17499"/>
        <dbReference type="ChEBI" id="CHEBI:29950"/>
        <dbReference type="ChEBI" id="CHEBI:30616"/>
        <dbReference type="ChEBI" id="CHEBI:33019"/>
        <dbReference type="ChEBI" id="CHEBI:61963"/>
        <dbReference type="ChEBI" id="CHEBI:65315"/>
        <dbReference type="ChEBI" id="CHEBI:87170"/>
        <dbReference type="ChEBI" id="CHEBI:456215"/>
        <dbReference type="EC" id="2.8.1.13"/>
    </reaction>
</comment>
<comment type="subcellular location">
    <subcellularLocation>
        <location evidence="1">Cytoplasm</location>
    </subcellularLocation>
</comment>
<comment type="similarity">
    <text evidence="1">Belongs to the MnmA/TRMU family.</text>
</comment>
<reference key="1">
    <citation type="journal article" date="2006" name="Genome Biol.">
        <title>Genomic analysis reveals that Pseudomonas aeruginosa virulence is combinatorial.</title>
        <authorList>
            <person name="Lee D.G."/>
            <person name="Urbach J.M."/>
            <person name="Wu G."/>
            <person name="Liberati N.T."/>
            <person name="Feinbaum R.L."/>
            <person name="Miyata S."/>
            <person name="Diggins L.T."/>
            <person name="He J."/>
            <person name="Saucier M."/>
            <person name="Deziel E."/>
            <person name="Friedman L."/>
            <person name="Li L."/>
            <person name="Grills G."/>
            <person name="Montgomery K."/>
            <person name="Kucherlapati R."/>
            <person name="Rahme L.G."/>
            <person name="Ausubel F.M."/>
        </authorList>
    </citation>
    <scope>NUCLEOTIDE SEQUENCE [LARGE SCALE GENOMIC DNA]</scope>
    <source>
        <strain>UCBPP-PA14</strain>
    </source>
</reference>
<proteinExistence type="inferred from homology"/>
<sequence>MSESAPTPRRERVIVGMSGGVDSSVSALLLLQQGYQVEGLFMKNWDEDDGTEYCTAREDLADAQAVCDRIGIKLHTANFAAEYWDNVFEHFLAEYKAGRTPNPDILCNREIKFKAFLDYALMLGADLIATGHYVRRRDRDGRTELLKGLDPNKDQSYFLHAVGGEQIARSLFPVGELEKPEVRAIAEKHGLATAKKKDSTGICFIGERRFTDFLKQYLPAQPGDIETTEGKVIGRHSGLMYHTIGQRQGLGIGGLKEAGDDPWYVLGKDLQRNVLLVGQGNDHPLLFSRALLASRIYWVNPVELERPRRLRAKVRYRQSDQDCVLEKTAEGYRAVFDEPQRAVTPGQSVVFYDGDVCLGGGVIETAEAWDFGGRP</sequence>
<feature type="chain" id="PRO_0000349758" description="tRNA-specific 2-thiouridylase MnmA">
    <location>
        <begin position="1"/>
        <end position="375"/>
    </location>
</feature>
<feature type="region of interest" description="Interaction with target base in tRNA" evidence="1">
    <location>
        <begin position="102"/>
        <end position="104"/>
    </location>
</feature>
<feature type="region of interest" description="Interaction with tRNA" evidence="1">
    <location>
        <begin position="153"/>
        <end position="155"/>
    </location>
</feature>
<feature type="region of interest" description="Interaction with tRNA" evidence="1">
    <location>
        <begin position="315"/>
        <end position="316"/>
    </location>
</feature>
<feature type="active site" description="Nucleophile" evidence="1">
    <location>
        <position position="107"/>
    </location>
</feature>
<feature type="active site" description="Cysteine persulfide intermediate" evidence="1">
    <location>
        <position position="203"/>
    </location>
</feature>
<feature type="binding site" evidence="1">
    <location>
        <begin position="16"/>
        <end position="23"/>
    </location>
    <ligand>
        <name>ATP</name>
        <dbReference type="ChEBI" id="CHEBI:30616"/>
    </ligand>
</feature>
<feature type="binding site" evidence="1">
    <location>
        <position position="42"/>
    </location>
    <ligand>
        <name>ATP</name>
        <dbReference type="ChEBI" id="CHEBI:30616"/>
    </ligand>
</feature>
<feature type="binding site" evidence="1">
    <location>
        <position position="131"/>
    </location>
    <ligand>
        <name>ATP</name>
        <dbReference type="ChEBI" id="CHEBI:30616"/>
    </ligand>
</feature>
<feature type="site" description="Interaction with tRNA" evidence="1">
    <location>
        <position position="132"/>
    </location>
</feature>
<feature type="site" description="Interaction with tRNA" evidence="1">
    <location>
        <position position="347"/>
    </location>
</feature>
<feature type="disulfide bond" description="Alternate" evidence="1">
    <location>
        <begin position="107"/>
        <end position="203"/>
    </location>
</feature>
<protein>
    <recommendedName>
        <fullName evidence="1">tRNA-specific 2-thiouridylase MnmA</fullName>
        <ecNumber evidence="1">2.8.1.13</ecNumber>
    </recommendedName>
</protein>